<reference key="1">
    <citation type="journal article" date="2003" name="Nat. Genet.">
        <title>Comparative analysis of the genome sequences of Bordetella pertussis, Bordetella parapertussis and Bordetella bronchiseptica.</title>
        <authorList>
            <person name="Parkhill J."/>
            <person name="Sebaihia M."/>
            <person name="Preston A."/>
            <person name="Murphy L.D."/>
            <person name="Thomson N.R."/>
            <person name="Harris D.E."/>
            <person name="Holden M.T.G."/>
            <person name="Churcher C.M."/>
            <person name="Bentley S.D."/>
            <person name="Mungall K.L."/>
            <person name="Cerdeno-Tarraga A.-M."/>
            <person name="Temple L."/>
            <person name="James K.D."/>
            <person name="Harris B."/>
            <person name="Quail M.A."/>
            <person name="Achtman M."/>
            <person name="Atkin R."/>
            <person name="Baker S."/>
            <person name="Basham D."/>
            <person name="Bason N."/>
            <person name="Cherevach I."/>
            <person name="Chillingworth T."/>
            <person name="Collins M."/>
            <person name="Cronin A."/>
            <person name="Davis P."/>
            <person name="Doggett J."/>
            <person name="Feltwell T."/>
            <person name="Goble A."/>
            <person name="Hamlin N."/>
            <person name="Hauser H."/>
            <person name="Holroyd S."/>
            <person name="Jagels K."/>
            <person name="Leather S."/>
            <person name="Moule S."/>
            <person name="Norberczak H."/>
            <person name="O'Neil S."/>
            <person name="Ormond D."/>
            <person name="Price C."/>
            <person name="Rabbinowitsch E."/>
            <person name="Rutter S."/>
            <person name="Sanders M."/>
            <person name="Saunders D."/>
            <person name="Seeger K."/>
            <person name="Sharp S."/>
            <person name="Simmonds M."/>
            <person name="Skelton J."/>
            <person name="Squares R."/>
            <person name="Squares S."/>
            <person name="Stevens K."/>
            <person name="Unwin L."/>
            <person name="Whitehead S."/>
            <person name="Barrell B.G."/>
            <person name="Maskell D.J."/>
        </authorList>
    </citation>
    <scope>NUCLEOTIDE SEQUENCE [LARGE SCALE GENOMIC DNA]</scope>
    <source>
        <strain>ATCC BAA-588 / NCTC 13252 / RB50</strain>
    </source>
</reference>
<protein>
    <recommendedName>
        <fullName evidence="1">tRNA N6-adenosine threonylcarbamoyltransferase</fullName>
        <ecNumber evidence="1">2.3.1.234</ecNumber>
    </recommendedName>
    <alternativeName>
        <fullName evidence="1">N6-L-threonylcarbamoyladenine synthase</fullName>
        <shortName evidence="1">t(6)A synthase</shortName>
    </alternativeName>
    <alternativeName>
        <fullName evidence="1">t(6)A37 threonylcarbamoyladenosine biosynthesis protein TsaD</fullName>
    </alternativeName>
    <alternativeName>
        <fullName evidence="1">tRNA threonylcarbamoyladenosine biosynthesis protein TsaD</fullName>
    </alternativeName>
</protein>
<dbReference type="EC" id="2.3.1.234" evidence="1"/>
<dbReference type="EMBL" id="BX640446">
    <property type="protein sequence ID" value="CAE33514.1"/>
    <property type="molecule type" value="Genomic_DNA"/>
</dbReference>
<dbReference type="RefSeq" id="WP_003811013.1">
    <property type="nucleotide sequence ID" value="NC_002927.3"/>
</dbReference>
<dbReference type="SMR" id="Q7WI34"/>
<dbReference type="GeneID" id="56479130"/>
<dbReference type="KEGG" id="bbr:BB3022"/>
<dbReference type="eggNOG" id="COG0533">
    <property type="taxonomic scope" value="Bacteria"/>
</dbReference>
<dbReference type="HOGENOM" id="CLU_023208_0_2_4"/>
<dbReference type="Proteomes" id="UP000001027">
    <property type="component" value="Chromosome"/>
</dbReference>
<dbReference type="GO" id="GO:0005737">
    <property type="term" value="C:cytoplasm"/>
    <property type="evidence" value="ECO:0007669"/>
    <property type="project" value="UniProtKB-SubCell"/>
</dbReference>
<dbReference type="GO" id="GO:0005506">
    <property type="term" value="F:iron ion binding"/>
    <property type="evidence" value="ECO:0007669"/>
    <property type="project" value="UniProtKB-UniRule"/>
</dbReference>
<dbReference type="GO" id="GO:0061711">
    <property type="term" value="F:N(6)-L-threonylcarbamoyladenine synthase activity"/>
    <property type="evidence" value="ECO:0007669"/>
    <property type="project" value="UniProtKB-EC"/>
</dbReference>
<dbReference type="GO" id="GO:0002949">
    <property type="term" value="P:tRNA threonylcarbamoyladenosine modification"/>
    <property type="evidence" value="ECO:0007669"/>
    <property type="project" value="UniProtKB-UniRule"/>
</dbReference>
<dbReference type="CDD" id="cd24133">
    <property type="entry name" value="ASKHA_NBD_TsaD_bac"/>
    <property type="match status" value="1"/>
</dbReference>
<dbReference type="FunFam" id="3.30.420.40:FF:000012">
    <property type="entry name" value="tRNA N6-adenosine threonylcarbamoyltransferase"/>
    <property type="match status" value="1"/>
</dbReference>
<dbReference type="FunFam" id="3.30.420.40:FF:000040">
    <property type="entry name" value="tRNA N6-adenosine threonylcarbamoyltransferase"/>
    <property type="match status" value="1"/>
</dbReference>
<dbReference type="Gene3D" id="3.30.420.40">
    <property type="match status" value="2"/>
</dbReference>
<dbReference type="HAMAP" id="MF_01445">
    <property type="entry name" value="TsaD"/>
    <property type="match status" value="1"/>
</dbReference>
<dbReference type="InterPro" id="IPR043129">
    <property type="entry name" value="ATPase_NBD"/>
</dbReference>
<dbReference type="InterPro" id="IPR000905">
    <property type="entry name" value="Gcp-like_dom"/>
</dbReference>
<dbReference type="InterPro" id="IPR017861">
    <property type="entry name" value="KAE1/TsaD"/>
</dbReference>
<dbReference type="InterPro" id="IPR022450">
    <property type="entry name" value="TsaD"/>
</dbReference>
<dbReference type="NCBIfam" id="TIGR00329">
    <property type="entry name" value="gcp_kae1"/>
    <property type="match status" value="1"/>
</dbReference>
<dbReference type="NCBIfam" id="TIGR03723">
    <property type="entry name" value="T6A_TsaD_YgjD"/>
    <property type="match status" value="1"/>
</dbReference>
<dbReference type="PANTHER" id="PTHR11735">
    <property type="entry name" value="TRNA N6-ADENOSINE THREONYLCARBAMOYLTRANSFERASE"/>
    <property type="match status" value="1"/>
</dbReference>
<dbReference type="PANTHER" id="PTHR11735:SF6">
    <property type="entry name" value="TRNA N6-ADENOSINE THREONYLCARBAMOYLTRANSFERASE, MITOCHONDRIAL"/>
    <property type="match status" value="1"/>
</dbReference>
<dbReference type="Pfam" id="PF00814">
    <property type="entry name" value="TsaD"/>
    <property type="match status" value="1"/>
</dbReference>
<dbReference type="PRINTS" id="PR00789">
    <property type="entry name" value="OSIALOPTASE"/>
</dbReference>
<dbReference type="SUPFAM" id="SSF53067">
    <property type="entry name" value="Actin-like ATPase domain"/>
    <property type="match status" value="2"/>
</dbReference>
<comment type="function">
    <text evidence="1">Required for the formation of a threonylcarbamoyl group on adenosine at position 37 (t(6)A37) in tRNAs that read codons beginning with adenine. Is involved in the transfer of the threonylcarbamoyl moiety of threonylcarbamoyl-AMP (TC-AMP) to the N6 group of A37, together with TsaE and TsaB. TsaD likely plays a direct catalytic role in this reaction.</text>
</comment>
<comment type="catalytic activity">
    <reaction evidence="1">
        <text>L-threonylcarbamoyladenylate + adenosine(37) in tRNA = N(6)-L-threonylcarbamoyladenosine(37) in tRNA + AMP + H(+)</text>
        <dbReference type="Rhea" id="RHEA:37059"/>
        <dbReference type="Rhea" id="RHEA-COMP:10162"/>
        <dbReference type="Rhea" id="RHEA-COMP:10163"/>
        <dbReference type="ChEBI" id="CHEBI:15378"/>
        <dbReference type="ChEBI" id="CHEBI:73682"/>
        <dbReference type="ChEBI" id="CHEBI:74411"/>
        <dbReference type="ChEBI" id="CHEBI:74418"/>
        <dbReference type="ChEBI" id="CHEBI:456215"/>
        <dbReference type="EC" id="2.3.1.234"/>
    </reaction>
</comment>
<comment type="cofactor">
    <cofactor evidence="1">
        <name>Fe(2+)</name>
        <dbReference type="ChEBI" id="CHEBI:29033"/>
    </cofactor>
    <text evidence="1">Binds 1 Fe(2+) ion per subunit.</text>
</comment>
<comment type="subcellular location">
    <subcellularLocation>
        <location evidence="1">Cytoplasm</location>
    </subcellularLocation>
</comment>
<comment type="similarity">
    <text evidence="1">Belongs to the KAE1 / TsaD family.</text>
</comment>
<name>TSAD_BORBR</name>
<evidence type="ECO:0000255" key="1">
    <source>
        <dbReference type="HAMAP-Rule" id="MF_01445"/>
    </source>
</evidence>
<keyword id="KW-0012">Acyltransferase</keyword>
<keyword id="KW-0963">Cytoplasm</keyword>
<keyword id="KW-0408">Iron</keyword>
<keyword id="KW-0479">Metal-binding</keyword>
<keyword id="KW-0808">Transferase</keyword>
<keyword id="KW-0819">tRNA processing</keyword>
<accession>Q7WI34</accession>
<proteinExistence type="inferred from homology"/>
<organism>
    <name type="scientific">Bordetella bronchiseptica (strain ATCC BAA-588 / NCTC 13252 / RB50)</name>
    <name type="common">Alcaligenes bronchisepticus</name>
    <dbReference type="NCBI Taxonomy" id="257310"/>
    <lineage>
        <taxon>Bacteria</taxon>
        <taxon>Pseudomonadati</taxon>
        <taxon>Pseudomonadota</taxon>
        <taxon>Betaproteobacteria</taxon>
        <taxon>Burkholderiales</taxon>
        <taxon>Alcaligenaceae</taxon>
        <taxon>Bordetella</taxon>
    </lineage>
</organism>
<sequence>MIILGFESSCDETGVAAVCTERGLLAHALHTQIAMHQEYGGVVPELASRDHIRRVVPLTRQVLAEAGLTLADVGAVAYTAGPGLAGALLVGASVAQALAWSRALPAIGIHHLEGHLLSPLLAEPRPEFPFVALLVSGGHTQLMRVDGVGRYELLGETLDDAAGEAFDKSAKLMGLGYPGGPALARLAEQGDASRYDLPRPMLHSGDLDFSFSGLKTAVLTRVKAATRDGGELGEQDRADLAAATQAAIVEVLAAKAIRALKQTGLRRLVVAGGVGANALLRAHLARALKPLRAEAYFPPLSLCTDNGAMIAFAAAERVKAGLADLREGDHAFTVRPRWDLADIQAG</sequence>
<gene>
    <name evidence="1" type="primary">tsaD</name>
    <name type="synonym">gcp</name>
    <name type="ordered locus">BB3022</name>
</gene>
<feature type="chain" id="PRO_0000303285" description="tRNA N6-adenosine threonylcarbamoyltransferase">
    <location>
        <begin position="1"/>
        <end position="346"/>
    </location>
</feature>
<feature type="binding site" evidence="1">
    <location>
        <position position="111"/>
    </location>
    <ligand>
        <name>Fe cation</name>
        <dbReference type="ChEBI" id="CHEBI:24875"/>
    </ligand>
</feature>
<feature type="binding site" evidence="1">
    <location>
        <position position="115"/>
    </location>
    <ligand>
        <name>Fe cation</name>
        <dbReference type="ChEBI" id="CHEBI:24875"/>
    </ligand>
</feature>
<feature type="binding site" evidence="1">
    <location>
        <begin position="134"/>
        <end position="138"/>
    </location>
    <ligand>
        <name>substrate</name>
    </ligand>
</feature>
<feature type="binding site" evidence="1">
    <location>
        <position position="167"/>
    </location>
    <ligand>
        <name>substrate</name>
    </ligand>
</feature>
<feature type="binding site" evidence="1">
    <location>
        <position position="180"/>
    </location>
    <ligand>
        <name>substrate</name>
    </ligand>
</feature>
<feature type="binding site" evidence="1">
    <location>
        <position position="277"/>
    </location>
    <ligand>
        <name>substrate</name>
    </ligand>
</feature>
<feature type="binding site" evidence="1">
    <location>
        <position position="305"/>
    </location>
    <ligand>
        <name>Fe cation</name>
        <dbReference type="ChEBI" id="CHEBI:24875"/>
    </ligand>
</feature>